<reference key="1">
    <citation type="journal article" date="2007" name="Genome Res.">
        <title>Genome characteristics of facultatively symbiotic Frankia sp. strains reflect host range and host plant biogeography.</title>
        <authorList>
            <person name="Normand P."/>
            <person name="Lapierre P."/>
            <person name="Tisa L.S."/>
            <person name="Gogarten J.P."/>
            <person name="Alloisio N."/>
            <person name="Bagnarol E."/>
            <person name="Bassi C.A."/>
            <person name="Berry A.M."/>
            <person name="Bickhart D.M."/>
            <person name="Choisne N."/>
            <person name="Couloux A."/>
            <person name="Cournoyer B."/>
            <person name="Cruveiller S."/>
            <person name="Daubin V."/>
            <person name="Demange N."/>
            <person name="Francino M.P."/>
            <person name="Goltsman E."/>
            <person name="Huang Y."/>
            <person name="Kopp O.R."/>
            <person name="Labarre L."/>
            <person name="Lapidus A."/>
            <person name="Lavire C."/>
            <person name="Marechal J."/>
            <person name="Martinez M."/>
            <person name="Mastronunzio J.E."/>
            <person name="Mullin B.C."/>
            <person name="Niemann J."/>
            <person name="Pujic P."/>
            <person name="Rawnsley T."/>
            <person name="Rouy Z."/>
            <person name="Schenowitz C."/>
            <person name="Sellstedt A."/>
            <person name="Tavares F."/>
            <person name="Tomkins J.P."/>
            <person name="Vallenet D."/>
            <person name="Valverde C."/>
            <person name="Wall L.G."/>
            <person name="Wang Y."/>
            <person name="Medigue C."/>
            <person name="Benson D.R."/>
        </authorList>
    </citation>
    <scope>NUCLEOTIDE SEQUENCE [LARGE SCALE GENOMIC DNA]</scope>
    <source>
        <strain>DSM 45818 / CECT 9043 / HFP020203 / CcI3</strain>
    </source>
</reference>
<keyword id="KW-0028">Amino-acid biosynthesis</keyword>
<keyword id="KW-0963">Cytoplasm</keyword>
<keyword id="KW-0368">Histidine biosynthesis</keyword>
<keyword id="KW-0456">Lyase</keyword>
<keyword id="KW-1185">Reference proteome</keyword>
<sequence>MARTARIERKTLESDVLVELDLDGTGISSSDTGVPFFDHMLSQLGKHGGFDLTVRTRGDLHIDAHHTVEDTSIAFGSALREALGDKAGIRRFGDATVPLDEALAQAAVDLSGRPYCVHVEPDLVGMIGTYDTTLTRHIFESITASARLALHVRVLSGRNAHHVVEAQFKAVARALRDAVALDARVAGIPSTKGVL</sequence>
<gene>
    <name evidence="1" type="primary">hisB</name>
    <name type="ordered locus">Francci3_3025</name>
</gene>
<organism>
    <name type="scientific">Frankia casuarinae (strain DSM 45818 / CECT 9043 / HFP020203 / CcI3)</name>
    <dbReference type="NCBI Taxonomy" id="106370"/>
    <lineage>
        <taxon>Bacteria</taxon>
        <taxon>Bacillati</taxon>
        <taxon>Actinomycetota</taxon>
        <taxon>Actinomycetes</taxon>
        <taxon>Frankiales</taxon>
        <taxon>Frankiaceae</taxon>
        <taxon>Frankia</taxon>
    </lineage>
</organism>
<feature type="chain" id="PRO_1000010278" description="Imidazoleglycerol-phosphate dehydratase">
    <location>
        <begin position="1"/>
        <end position="195"/>
    </location>
</feature>
<dbReference type="EC" id="4.2.1.19" evidence="1"/>
<dbReference type="EMBL" id="CP000249">
    <property type="protein sequence ID" value="ABD12382.1"/>
    <property type="molecule type" value="Genomic_DNA"/>
</dbReference>
<dbReference type="RefSeq" id="WP_011437410.1">
    <property type="nucleotide sequence ID" value="NZ_MSEA01000300.1"/>
</dbReference>
<dbReference type="SMR" id="Q2J8L0"/>
<dbReference type="STRING" id="106370.Francci3_3025"/>
<dbReference type="KEGG" id="fra:Francci3_3025"/>
<dbReference type="eggNOG" id="COG0131">
    <property type="taxonomic scope" value="Bacteria"/>
</dbReference>
<dbReference type="HOGENOM" id="CLU_044308_2_0_11"/>
<dbReference type="OrthoDB" id="9790411at2"/>
<dbReference type="PhylomeDB" id="Q2J8L0"/>
<dbReference type="UniPathway" id="UPA00031">
    <property type="reaction ID" value="UER00011"/>
</dbReference>
<dbReference type="Proteomes" id="UP000001937">
    <property type="component" value="Chromosome"/>
</dbReference>
<dbReference type="GO" id="GO:0005737">
    <property type="term" value="C:cytoplasm"/>
    <property type="evidence" value="ECO:0007669"/>
    <property type="project" value="UniProtKB-SubCell"/>
</dbReference>
<dbReference type="GO" id="GO:0004424">
    <property type="term" value="F:imidazoleglycerol-phosphate dehydratase activity"/>
    <property type="evidence" value="ECO:0007669"/>
    <property type="project" value="UniProtKB-UniRule"/>
</dbReference>
<dbReference type="GO" id="GO:0000105">
    <property type="term" value="P:L-histidine biosynthetic process"/>
    <property type="evidence" value="ECO:0007669"/>
    <property type="project" value="UniProtKB-UniRule"/>
</dbReference>
<dbReference type="CDD" id="cd07914">
    <property type="entry name" value="IGPD"/>
    <property type="match status" value="1"/>
</dbReference>
<dbReference type="FunFam" id="3.30.230.40:FF:000001">
    <property type="entry name" value="Imidazoleglycerol-phosphate dehydratase HisB"/>
    <property type="match status" value="1"/>
</dbReference>
<dbReference type="FunFam" id="3.30.230.40:FF:000003">
    <property type="entry name" value="Imidazoleglycerol-phosphate dehydratase HisB"/>
    <property type="match status" value="1"/>
</dbReference>
<dbReference type="Gene3D" id="3.30.230.40">
    <property type="entry name" value="Imidazole glycerol phosphate dehydratase, domain 1"/>
    <property type="match status" value="2"/>
</dbReference>
<dbReference type="HAMAP" id="MF_00076">
    <property type="entry name" value="HisB"/>
    <property type="match status" value="1"/>
</dbReference>
<dbReference type="InterPro" id="IPR038494">
    <property type="entry name" value="IGPD_sf"/>
</dbReference>
<dbReference type="InterPro" id="IPR000807">
    <property type="entry name" value="ImidazoleglycerolP_deHydtase"/>
</dbReference>
<dbReference type="InterPro" id="IPR020565">
    <property type="entry name" value="ImidazoleglycerP_deHydtase_CS"/>
</dbReference>
<dbReference type="InterPro" id="IPR020568">
    <property type="entry name" value="Ribosomal_Su5_D2-typ_SF"/>
</dbReference>
<dbReference type="NCBIfam" id="NF002110">
    <property type="entry name" value="PRK00951.1-6"/>
    <property type="match status" value="1"/>
</dbReference>
<dbReference type="NCBIfam" id="NF002111">
    <property type="entry name" value="PRK00951.2-1"/>
    <property type="match status" value="1"/>
</dbReference>
<dbReference type="NCBIfam" id="NF002114">
    <property type="entry name" value="PRK00951.2-4"/>
    <property type="match status" value="1"/>
</dbReference>
<dbReference type="PANTHER" id="PTHR23133:SF2">
    <property type="entry name" value="IMIDAZOLEGLYCEROL-PHOSPHATE DEHYDRATASE"/>
    <property type="match status" value="1"/>
</dbReference>
<dbReference type="PANTHER" id="PTHR23133">
    <property type="entry name" value="IMIDAZOLEGLYCEROL-PHOSPHATE DEHYDRATASE HIS7"/>
    <property type="match status" value="1"/>
</dbReference>
<dbReference type="Pfam" id="PF00475">
    <property type="entry name" value="IGPD"/>
    <property type="match status" value="1"/>
</dbReference>
<dbReference type="SUPFAM" id="SSF54211">
    <property type="entry name" value="Ribosomal protein S5 domain 2-like"/>
    <property type="match status" value="2"/>
</dbReference>
<dbReference type="PROSITE" id="PS00955">
    <property type="entry name" value="IGP_DEHYDRATASE_2"/>
    <property type="match status" value="1"/>
</dbReference>
<evidence type="ECO:0000255" key="1">
    <source>
        <dbReference type="HAMAP-Rule" id="MF_00076"/>
    </source>
</evidence>
<proteinExistence type="inferred from homology"/>
<name>HIS7_FRACC</name>
<protein>
    <recommendedName>
        <fullName evidence="1">Imidazoleglycerol-phosphate dehydratase</fullName>
        <shortName evidence="1">IGPD</shortName>
        <ecNumber evidence="1">4.2.1.19</ecNumber>
    </recommendedName>
</protein>
<accession>Q2J8L0</accession>
<comment type="catalytic activity">
    <reaction evidence="1">
        <text>D-erythro-1-(imidazol-4-yl)glycerol 3-phosphate = 3-(imidazol-4-yl)-2-oxopropyl phosphate + H2O</text>
        <dbReference type="Rhea" id="RHEA:11040"/>
        <dbReference type="ChEBI" id="CHEBI:15377"/>
        <dbReference type="ChEBI" id="CHEBI:57766"/>
        <dbReference type="ChEBI" id="CHEBI:58278"/>
        <dbReference type="EC" id="4.2.1.19"/>
    </reaction>
</comment>
<comment type="pathway">
    <text evidence="1">Amino-acid biosynthesis; L-histidine biosynthesis; L-histidine from 5-phospho-alpha-D-ribose 1-diphosphate: step 6/9.</text>
</comment>
<comment type="subcellular location">
    <subcellularLocation>
        <location evidence="1">Cytoplasm</location>
    </subcellularLocation>
</comment>
<comment type="similarity">
    <text evidence="1">Belongs to the imidazoleglycerol-phosphate dehydratase family.</text>
</comment>